<accession>P62856</accession>
<accession>P02383</accession>
<accession>P70394</accession>
<accession>Q06722</accession>
<protein>
    <recommendedName>
        <fullName evidence="4">Small ribosomal subunit protein eS26</fullName>
    </recommendedName>
    <alternativeName>
        <fullName>40S ribosomal protein S26</fullName>
    </alternativeName>
</protein>
<comment type="function">
    <text evidence="2">Component of the small ribosomal subunit. The ribosome is a large ribonucleoprotein complex responsible for the synthesis of proteins in the cell.</text>
</comment>
<comment type="subunit">
    <text evidence="1">Component of the 40S small ribosomal subunit.</text>
</comment>
<comment type="subcellular location">
    <subcellularLocation>
        <location evidence="2">Cytoplasm</location>
        <location evidence="2">Cytosol</location>
    </subcellularLocation>
    <subcellularLocation>
        <location evidence="2">Cytoplasm</location>
    </subcellularLocation>
    <subcellularLocation>
        <location evidence="1">Rough endoplasmic reticulum</location>
    </subcellularLocation>
    <text evidence="1 2">Detected on cytosolic polysomes (By similarity). Detected in ribosomes that are associated with the rough endoplasmic reticulum (By similarity).</text>
</comment>
<comment type="similarity">
    <text evidence="4">Belongs to the eukaryotic ribosomal protein eS26 family.</text>
</comment>
<name>RS26_RAT</name>
<dbReference type="EMBL" id="X02414">
    <property type="protein sequence ID" value="CAA26264.1"/>
    <property type="molecule type" value="mRNA"/>
</dbReference>
<dbReference type="EMBL" id="BC061561">
    <property type="protein sequence ID" value="AAH61561.1"/>
    <property type="molecule type" value="mRNA"/>
</dbReference>
<dbReference type="PIR" id="A02753">
    <property type="entry name" value="R4RT26"/>
</dbReference>
<dbReference type="RefSeq" id="NP_037356.1">
    <property type="nucleotide sequence ID" value="NM_013224.1"/>
</dbReference>
<dbReference type="RefSeq" id="XP_002728047.3">
    <property type="nucleotide sequence ID" value="XM_002728001.4"/>
</dbReference>
<dbReference type="RefSeq" id="XP_003752685.3">
    <property type="nucleotide sequence ID" value="XM_003752637.3"/>
</dbReference>
<dbReference type="SMR" id="P62856"/>
<dbReference type="BioGRID" id="247811">
    <property type="interactions" value="4"/>
</dbReference>
<dbReference type="FunCoup" id="P62856">
    <property type="interactions" value="1924"/>
</dbReference>
<dbReference type="IntAct" id="P62856">
    <property type="interactions" value="3"/>
</dbReference>
<dbReference type="MINT" id="P62856"/>
<dbReference type="STRING" id="10116.ENSRNOP00000048116"/>
<dbReference type="iPTMnet" id="P62856"/>
<dbReference type="PhosphoSitePlus" id="P62856"/>
<dbReference type="jPOST" id="P62856"/>
<dbReference type="PaxDb" id="10116-ENSRNOP00000007304"/>
<dbReference type="GeneID" id="27139"/>
<dbReference type="KEGG" id="rno:27139"/>
<dbReference type="UCSC" id="RGD:621044">
    <property type="organism name" value="rat"/>
</dbReference>
<dbReference type="AGR" id="RGD:621044"/>
<dbReference type="CTD" id="6231"/>
<dbReference type="RGD" id="621044">
    <property type="gene designation" value="Rps26"/>
</dbReference>
<dbReference type="eggNOG" id="KOG1768">
    <property type="taxonomic scope" value="Eukaryota"/>
</dbReference>
<dbReference type="InParanoid" id="P62856"/>
<dbReference type="OrthoDB" id="10262653at2759"/>
<dbReference type="PhylomeDB" id="P62856"/>
<dbReference type="TreeFam" id="TF300234"/>
<dbReference type="Reactome" id="R-RNO-156827">
    <property type="pathway name" value="L13a-mediated translational silencing of Ceruloplasmin expression"/>
</dbReference>
<dbReference type="Reactome" id="R-RNO-1799339">
    <property type="pathway name" value="SRP-dependent cotranslational protein targeting to membrane"/>
</dbReference>
<dbReference type="Reactome" id="R-RNO-6791226">
    <property type="pathway name" value="Major pathway of rRNA processing in the nucleolus and cytosol"/>
</dbReference>
<dbReference type="Reactome" id="R-RNO-72649">
    <property type="pathway name" value="Translation initiation complex formation"/>
</dbReference>
<dbReference type="Reactome" id="R-RNO-72689">
    <property type="pathway name" value="Formation of a pool of free 40S subunits"/>
</dbReference>
<dbReference type="Reactome" id="R-RNO-72695">
    <property type="pathway name" value="Formation of the ternary complex, and subsequently, the 43S complex"/>
</dbReference>
<dbReference type="Reactome" id="R-RNO-72702">
    <property type="pathway name" value="Ribosomal scanning and start codon recognition"/>
</dbReference>
<dbReference type="Reactome" id="R-RNO-72706">
    <property type="pathway name" value="GTP hydrolysis and joining of the 60S ribosomal subunit"/>
</dbReference>
<dbReference type="Reactome" id="R-RNO-975956">
    <property type="pathway name" value="Nonsense Mediated Decay (NMD) independent of the Exon Junction Complex (EJC)"/>
</dbReference>
<dbReference type="Reactome" id="R-RNO-975957">
    <property type="pathway name" value="Nonsense Mediated Decay (NMD) enhanced by the Exon Junction Complex (EJC)"/>
</dbReference>
<dbReference type="PRO" id="PR:P62856"/>
<dbReference type="Proteomes" id="UP000002494">
    <property type="component" value="Unplaced"/>
</dbReference>
<dbReference type="GO" id="GO:0098556">
    <property type="term" value="C:cytoplasmic side of rough endoplasmic reticulum membrane"/>
    <property type="evidence" value="ECO:0000250"/>
    <property type="project" value="UniProtKB"/>
</dbReference>
<dbReference type="GO" id="GO:0022627">
    <property type="term" value="C:cytosolic small ribosomal subunit"/>
    <property type="evidence" value="ECO:0000314"/>
    <property type="project" value="RGD"/>
</dbReference>
<dbReference type="GO" id="GO:0005840">
    <property type="term" value="C:ribosome"/>
    <property type="evidence" value="ECO:0000250"/>
    <property type="project" value="UniProtKB"/>
</dbReference>
<dbReference type="GO" id="GO:0045202">
    <property type="term" value="C:synapse"/>
    <property type="evidence" value="ECO:0000266"/>
    <property type="project" value="RGD"/>
</dbReference>
<dbReference type="GO" id="GO:0003729">
    <property type="term" value="F:mRNA binding"/>
    <property type="evidence" value="ECO:0000266"/>
    <property type="project" value="RGD"/>
</dbReference>
<dbReference type="GO" id="GO:0003735">
    <property type="term" value="F:structural constituent of ribosome"/>
    <property type="evidence" value="ECO:0000266"/>
    <property type="project" value="RGD"/>
</dbReference>
<dbReference type="GO" id="GO:0002181">
    <property type="term" value="P:cytoplasmic translation"/>
    <property type="evidence" value="ECO:0000250"/>
    <property type="project" value="UniProtKB"/>
</dbReference>
<dbReference type="GO" id="GO:0033119">
    <property type="term" value="P:negative regulation of RNA splicing"/>
    <property type="evidence" value="ECO:0000266"/>
    <property type="project" value="RGD"/>
</dbReference>
<dbReference type="FunFam" id="3.30.1740.20:FF:000001">
    <property type="entry name" value="40S ribosomal protein S26"/>
    <property type="match status" value="1"/>
</dbReference>
<dbReference type="Gene3D" id="3.30.1740.20">
    <property type="entry name" value="Ribosomal protein S26e"/>
    <property type="match status" value="1"/>
</dbReference>
<dbReference type="InterPro" id="IPR000892">
    <property type="entry name" value="Ribosomal_eS26"/>
</dbReference>
<dbReference type="InterPro" id="IPR047864">
    <property type="entry name" value="Ribosomal_eS26_CS"/>
</dbReference>
<dbReference type="InterPro" id="IPR038551">
    <property type="entry name" value="Ribosomal_eS26_sf"/>
</dbReference>
<dbReference type="PANTHER" id="PTHR12538">
    <property type="entry name" value="40S RIBOSOMAL PROTEIN S26"/>
    <property type="match status" value="1"/>
</dbReference>
<dbReference type="PANTHER" id="PTHR12538:SF7">
    <property type="entry name" value="SMALL RIBOSOMAL SUBUNIT PROTEIN ES26-RELATED"/>
    <property type="match status" value="1"/>
</dbReference>
<dbReference type="Pfam" id="PF01283">
    <property type="entry name" value="Ribosomal_S26e"/>
    <property type="match status" value="1"/>
</dbReference>
<dbReference type="PROSITE" id="PS00733">
    <property type="entry name" value="RIBOSOMAL_S26E"/>
    <property type="match status" value="1"/>
</dbReference>
<reference key="1">
    <citation type="journal article" date="1985" name="J. Biochem.">
        <title>Molecular cloning and nucleotide sequence of DNA complementary to rat ribosomal protein S26 messenger RNA.</title>
        <authorList>
            <person name="Kuwano Y."/>
            <person name="Nakanishi O."/>
            <person name="Nabeshima Y."/>
            <person name="Tanaka T."/>
            <person name="Ogata K."/>
        </authorList>
    </citation>
    <scope>NUCLEOTIDE SEQUENCE [MRNA]</scope>
</reference>
<reference key="2">
    <citation type="journal article" date="2004" name="Genome Res.">
        <title>The status, quality, and expansion of the NIH full-length cDNA project: the Mammalian Gene Collection (MGC).</title>
        <authorList>
            <consortium name="The MGC Project Team"/>
        </authorList>
    </citation>
    <scope>NUCLEOTIDE SEQUENCE [LARGE SCALE MRNA]</scope>
    <source>
        <tissue>Pituitary</tissue>
    </source>
</reference>
<keyword id="KW-0963">Cytoplasm</keyword>
<keyword id="KW-0256">Endoplasmic reticulum</keyword>
<keyword id="KW-0597">Phosphoprotein</keyword>
<keyword id="KW-1185">Reference proteome</keyword>
<keyword id="KW-0687">Ribonucleoprotein</keyword>
<keyword id="KW-0689">Ribosomal protein</keyword>
<organism>
    <name type="scientific">Rattus norvegicus</name>
    <name type="common">Rat</name>
    <dbReference type="NCBI Taxonomy" id="10116"/>
    <lineage>
        <taxon>Eukaryota</taxon>
        <taxon>Metazoa</taxon>
        <taxon>Chordata</taxon>
        <taxon>Craniata</taxon>
        <taxon>Vertebrata</taxon>
        <taxon>Euteleostomi</taxon>
        <taxon>Mammalia</taxon>
        <taxon>Eutheria</taxon>
        <taxon>Euarchontoglires</taxon>
        <taxon>Glires</taxon>
        <taxon>Rodentia</taxon>
        <taxon>Myomorpha</taxon>
        <taxon>Muroidea</taxon>
        <taxon>Muridae</taxon>
        <taxon>Murinae</taxon>
        <taxon>Rattus</taxon>
    </lineage>
</organism>
<evidence type="ECO:0000250" key="1">
    <source>
        <dbReference type="UniProtKB" id="P49171"/>
    </source>
</evidence>
<evidence type="ECO:0000250" key="2">
    <source>
        <dbReference type="UniProtKB" id="P62854"/>
    </source>
</evidence>
<evidence type="ECO:0000256" key="3">
    <source>
        <dbReference type="SAM" id="MobiDB-lite"/>
    </source>
</evidence>
<evidence type="ECO:0000305" key="4"/>
<feature type="chain" id="PRO_0000204514" description="Small ribosomal subunit protein eS26">
    <location>
        <begin position="1"/>
        <end position="115"/>
    </location>
</feature>
<feature type="region of interest" description="Disordered" evidence="3">
    <location>
        <begin position="85"/>
        <end position="115"/>
    </location>
</feature>
<feature type="compositionally biased region" description="Basic and acidic residues" evidence="3">
    <location>
        <begin position="87"/>
        <end position="97"/>
    </location>
</feature>
<feature type="modified residue" description="Phosphoserine" evidence="2">
    <location>
        <position position="54"/>
    </location>
</feature>
<sequence length="115" mass="13015">MTKKRRNNGRAKKGRGHVQPIRCTNCARCVPKDKAIKKFVIRNIVEAAAVRDISEASVFDAYVLPKLYVKLHYCVSCAIHSKVVRNRSREARKDRTPPPRFRPAGAAPRPPPKPM</sequence>
<proteinExistence type="inferred from homology"/>
<gene>
    <name type="primary">Rps26</name>
</gene>